<dbReference type="EMBL" id="AK173120">
    <property type="protein sequence ID" value="BAD32398.1"/>
    <property type="status" value="ALT_INIT"/>
    <property type="molecule type" value="mRNA"/>
</dbReference>
<dbReference type="EMBL" id="AC139573">
    <property type="status" value="NOT_ANNOTATED_CDS"/>
    <property type="molecule type" value="Genomic_DNA"/>
</dbReference>
<dbReference type="EMBL" id="BC024860">
    <property type="protein sequence ID" value="AAH24860.1"/>
    <property type="status" value="ALT_INIT"/>
    <property type="molecule type" value="mRNA"/>
</dbReference>
<dbReference type="EMBL" id="BC053096">
    <property type="protein sequence ID" value="AAH53096.1"/>
    <property type="molecule type" value="mRNA"/>
</dbReference>
<dbReference type="EMBL" id="BC057592">
    <property type="protein sequence ID" value="AAH57592.1"/>
    <property type="molecule type" value="mRNA"/>
</dbReference>
<dbReference type="CCDS" id="CCDS37396.1">
    <molecule id="Q7TSH6-3"/>
</dbReference>
<dbReference type="CCDS" id="CCDS84260.1">
    <molecule id="Q7TSH6-1"/>
</dbReference>
<dbReference type="CCDS" id="CCDS88967.1">
    <molecule id="Q7TSH6-2"/>
</dbReference>
<dbReference type="RefSeq" id="NP_001333728.1">
    <molecule id="Q7TSH6-1"/>
    <property type="nucleotide sequence ID" value="NM_001346799.3"/>
</dbReference>
<dbReference type="RefSeq" id="NP_001345331.1">
    <molecule id="Q7TSH6-2"/>
    <property type="nucleotide sequence ID" value="NM_001358402.2"/>
</dbReference>
<dbReference type="RefSeq" id="NP_849254.2">
    <molecule id="Q7TSH6-3"/>
    <property type="nucleotide sequence ID" value="NM_178923.4"/>
</dbReference>
<dbReference type="RefSeq" id="XP_006523075.1">
    <property type="nucleotide sequence ID" value="XM_006523012.2"/>
</dbReference>
<dbReference type="SMR" id="Q7TSH6"/>
<dbReference type="FunCoup" id="Q7TSH6">
    <property type="interactions" value="5214"/>
</dbReference>
<dbReference type="STRING" id="10090.ENSMUSP00000044472"/>
<dbReference type="GlyGen" id="Q7TSH6">
    <property type="glycosylation" value="3 sites"/>
</dbReference>
<dbReference type="iPTMnet" id="Q7TSH6"/>
<dbReference type="PhosphoSitePlus" id="Q7TSH6"/>
<dbReference type="jPOST" id="Q7TSH6"/>
<dbReference type="PaxDb" id="10090-ENSMUSP00000044472"/>
<dbReference type="PeptideAtlas" id="Q7TSH6"/>
<dbReference type="ProteomicsDB" id="328722"/>
<dbReference type="ProteomicsDB" id="330275">
    <molecule id="Q7TSH6-1"/>
</dbReference>
<dbReference type="Pumba" id="Q7TSH6"/>
<dbReference type="Antibodypedia" id="6761">
    <property type="antibodies" value="100 antibodies from 24 providers"/>
</dbReference>
<dbReference type="Ensembl" id="ENSMUST00000039280.9">
    <molecule id="Q7TSH6-3"/>
    <property type="protein sequence ID" value="ENSMUSP00000044472.8"/>
    <property type="gene ID" value="ENSMUSG00000022983.17"/>
</dbReference>
<dbReference type="Ensembl" id="ENSMUST00000163419.9">
    <molecule id="Q7TSH6-1"/>
    <property type="protein sequence ID" value="ENSMUSP00000132250.2"/>
    <property type="gene ID" value="ENSMUSG00000022983.17"/>
</dbReference>
<dbReference type="Ensembl" id="ENSMUST00000232371.2">
    <molecule id="Q7TSH6-2"/>
    <property type="protein sequence ID" value="ENSMUSP00000156174.2"/>
    <property type="gene ID" value="ENSMUSG00000022983.17"/>
</dbReference>
<dbReference type="GeneID" id="224432"/>
<dbReference type="KEGG" id="mmu:224432"/>
<dbReference type="UCSC" id="uc007zwb.2">
    <property type="organism name" value="mouse"/>
</dbReference>
<dbReference type="UCSC" id="uc007zwd.2">
    <molecule id="Q7TSH6-1"/>
    <property type="organism name" value="mouse"/>
</dbReference>
<dbReference type="AGR" id="MGI:2146350"/>
<dbReference type="CTD" id="57466"/>
<dbReference type="MGI" id="MGI:2146350">
    <property type="gene designation" value="Scaf4"/>
</dbReference>
<dbReference type="VEuPathDB" id="HostDB:ENSMUSG00000022983"/>
<dbReference type="eggNOG" id="KOG0132">
    <property type="taxonomic scope" value="Eukaryota"/>
</dbReference>
<dbReference type="GeneTree" id="ENSGT00530000063946"/>
<dbReference type="HOGENOM" id="CLU_005263_0_1_1"/>
<dbReference type="InParanoid" id="Q7TSH6"/>
<dbReference type="OMA" id="PPQMIAR"/>
<dbReference type="TreeFam" id="TF324527"/>
<dbReference type="BioGRID-ORCS" id="224432">
    <property type="hits" value="16 hits in 77 CRISPR screens"/>
</dbReference>
<dbReference type="ChiTaRS" id="Scaf4">
    <property type="organism name" value="mouse"/>
</dbReference>
<dbReference type="PRO" id="PR:Q7TSH6"/>
<dbReference type="Proteomes" id="UP000000589">
    <property type="component" value="Chromosome 16"/>
</dbReference>
<dbReference type="Bgee" id="ENSMUSG00000022983">
    <property type="expression patterns" value="Expressed in dorsal pancreas and 279 other cell types or tissues"/>
</dbReference>
<dbReference type="GO" id="GO:0005654">
    <property type="term" value="C:nucleoplasm"/>
    <property type="evidence" value="ECO:0007669"/>
    <property type="project" value="Ensembl"/>
</dbReference>
<dbReference type="GO" id="GO:0005634">
    <property type="term" value="C:nucleus"/>
    <property type="evidence" value="ECO:0000250"/>
    <property type="project" value="UniProtKB"/>
</dbReference>
<dbReference type="GO" id="GO:0003723">
    <property type="term" value="F:RNA binding"/>
    <property type="evidence" value="ECO:0000250"/>
    <property type="project" value="UniProtKB"/>
</dbReference>
<dbReference type="GO" id="GO:1990269">
    <property type="term" value="F:RNA polymerase II C-terminal domain phosphoserine binding"/>
    <property type="evidence" value="ECO:0000250"/>
    <property type="project" value="UniProtKB"/>
</dbReference>
<dbReference type="GO" id="GO:2000805">
    <property type="term" value="P:negative regulation of termination of RNA polymerase II transcription, poly(A)-coupled"/>
    <property type="evidence" value="ECO:0000250"/>
    <property type="project" value="UniProtKB"/>
</dbReference>
<dbReference type="CDD" id="cd17005">
    <property type="entry name" value="CID_SFRS15_SCAF4"/>
    <property type="match status" value="1"/>
</dbReference>
<dbReference type="CDD" id="cd12461">
    <property type="entry name" value="RRM_SCAF4"/>
    <property type="match status" value="1"/>
</dbReference>
<dbReference type="FunFam" id="1.25.40.90:FF:000004">
    <property type="entry name" value="splicing factor, arginine/serine-rich 15"/>
    <property type="match status" value="1"/>
</dbReference>
<dbReference type="FunFam" id="3.30.70.330:FF:000094">
    <property type="entry name" value="SR-related CTD associated factor 8"/>
    <property type="match status" value="1"/>
</dbReference>
<dbReference type="Gene3D" id="1.25.40.90">
    <property type="match status" value="1"/>
</dbReference>
<dbReference type="Gene3D" id="3.30.70.330">
    <property type="match status" value="1"/>
</dbReference>
<dbReference type="InterPro" id="IPR006569">
    <property type="entry name" value="CID_dom"/>
</dbReference>
<dbReference type="InterPro" id="IPR008942">
    <property type="entry name" value="ENTH_VHS"/>
</dbReference>
<dbReference type="InterPro" id="IPR012677">
    <property type="entry name" value="Nucleotide-bd_a/b_plait_sf"/>
</dbReference>
<dbReference type="InterPro" id="IPR035979">
    <property type="entry name" value="RBD_domain_sf"/>
</dbReference>
<dbReference type="InterPro" id="IPR000504">
    <property type="entry name" value="RRM_dom"/>
</dbReference>
<dbReference type="InterPro" id="IPR034369">
    <property type="entry name" value="SCAF4_RRM"/>
</dbReference>
<dbReference type="InterPro" id="IPR051485">
    <property type="entry name" value="SR-CTD_assoc_factor"/>
</dbReference>
<dbReference type="PANTHER" id="PTHR23140">
    <property type="entry name" value="RNA PROCESSING PROTEIN LD23810P"/>
    <property type="match status" value="1"/>
</dbReference>
<dbReference type="PANTHER" id="PTHR23140:SF3">
    <property type="entry name" value="SR-RELATED AND CTD-ASSOCIATED FACTOR 4"/>
    <property type="match status" value="1"/>
</dbReference>
<dbReference type="Pfam" id="PF04818">
    <property type="entry name" value="CID"/>
    <property type="match status" value="1"/>
</dbReference>
<dbReference type="Pfam" id="PF00076">
    <property type="entry name" value="RRM_1"/>
    <property type="match status" value="1"/>
</dbReference>
<dbReference type="SMART" id="SM00582">
    <property type="entry name" value="RPR"/>
    <property type="match status" value="1"/>
</dbReference>
<dbReference type="SMART" id="SM00360">
    <property type="entry name" value="RRM"/>
    <property type="match status" value="1"/>
</dbReference>
<dbReference type="SUPFAM" id="SSF48464">
    <property type="entry name" value="ENTH/VHS domain"/>
    <property type="match status" value="1"/>
</dbReference>
<dbReference type="SUPFAM" id="SSF54928">
    <property type="entry name" value="RNA-binding domain, RBD"/>
    <property type="match status" value="1"/>
</dbReference>
<dbReference type="PROSITE" id="PS51391">
    <property type="entry name" value="CID"/>
    <property type="match status" value="1"/>
</dbReference>
<dbReference type="PROSITE" id="PS50102">
    <property type="entry name" value="RRM"/>
    <property type="match status" value="1"/>
</dbReference>
<proteinExistence type="evidence at protein level"/>
<name>SCAF4_MOUSE</name>
<sequence length="1183" mass="129056">MDAVNAFNQELFSLMDMKPPISRAKMILITKAAIKAIKLYKHVVQIVEKFIKKCKPEYKVPGLYVIDSIVRQSRHQFGTDKDVFGPRFSKNITATFQYLYLCPSEDKSKIVRVLNLWQKNGVFKIEIIQPLLDMAAGTSNAAPVAENVTNNEGSPPPPVKISSELAQAPTNSMPTVAQLPSSDAFAAVAQLFQTTQGQQLQQILQTFQQPPQPQSPALDSAVMAQVQAITAQLKTAPTQPPEQKTAFDKKLLDRFDYDDEPEAVEDSKKEDAAAISTAALATAAPPAPTAATPAVATAVPVPSATSPPPPQTPFGYPGDGVQQPAYTQHQSMDQFQPRMMPIQQDTMHHQVPLPPNGQMPGFGLLSAPPPFPPMPQPGMPQPGMAQPGLAQPGMAQPTMPQPGMPQPGMPQPGMAQPGLAQPGMAQPGMPQPAMPQPAMPQPGMAQPGVSPAPPVQPTFQSTFQPQNEPHSQKPHQQEMEVEQPCVTEVKRHVPESRKSRSRSPKRRRSRSGSRSRRSRHRRSRSRSRDRRRHSPRSRSQERRDREKERERRQKGLPQIKSETASVCSTTLWVGQLDKRTTQQDVASLLEEFGPIESINMIPPRGCAYIVMVHRQDAYRALQKLSRGNYKVNQKSIKIAWALNKGIKADYKQYWDVELGVTYIPWDKVKAEELESFCEGGMLDSDTLNPDWKGIPKKPDNEVAQNGGAETSHTEPVSPIPKPVPVPVPPIPVPAPITVPPPQVPPHQPGPPVVGALQPPAFTPPLGMPPPGFGPGVPPPPPPPPFLRPGFNPMHLPPGFLPPGPPPPITPPVSIPPPHTPPISIPNLVSGARGNAESGDSAKMYGSAGPPAAPTSLPTPPVTQPVSLLGTQGVAPGPVIGLQAPSTGLLGARPGLIPLQRPPGMPPPHLQRFPMMPPRPMPPHMMHRGPPPGPGGFAMPPPHGMKGPFPPHGPFVRPGGMPGLGGPGPGPGASEDRDGRQQQPQQQPPPQQQQQQQQPQQQPPQQSPSQQPAPAQQQPPQFRNDSRQQFNSGRDQERFGRRSFGSRVENDRERYGSRNDDRDNSNRERREWGRRSPDRDRHRDLEERSRRSSGHRDRDRDSRDRESRREKEENRKEKHEVADRAGGNKAVEPPLSQVGTIDTVSELNKGEAMATVVKPEESPAEVTSPVGPEKDPGSAAEPPR</sequence>
<comment type="function">
    <text evidence="1">Anti-terminator protein required to prevent early mRNA termination during transcription. Together with SCAF8, acts by suppressing the use of early, alternative poly(A) sites, thereby preventing the accumulation of non-functional truncated proteins. Mechanistically, associates with the phosphorylated C-terminal heptapeptide repeat domain (CTD) of the largest RNA polymerase II subunit (POLR2A), and subsequently binds nascent RNA upstream of early polyadenylation sites to prevent premature mRNA transcript cleavage and polyadenylation. Independently of SCAF8, also acts as a suppressor of transcriptional readthrough.</text>
</comment>
<comment type="subunit">
    <text evidence="1">Interacts with POLR2A; via C-terminal heptapeptide repeat domain (CTD) phosphorylated at 'Ser-2' and 'Ser-5'.</text>
</comment>
<comment type="subcellular location">
    <subcellularLocation>
        <location evidence="1">Nucleus</location>
    </subcellularLocation>
</comment>
<comment type="alternative products">
    <event type="alternative splicing"/>
    <isoform>
        <id>Q7TSH6-1</id>
        <name>1</name>
        <sequence type="displayed"/>
    </isoform>
    <isoform>
        <id>Q7TSH6-2</id>
        <name>2</name>
        <sequence type="described" ref="VSP_060218"/>
    </isoform>
    <isoform>
        <id>Q7TSH6-3</id>
        <name>3</name>
        <sequence type="described" ref="VSP_060219 VSP_060220"/>
    </isoform>
</comment>
<comment type="sequence caution" evidence="6">
    <conflict type="erroneous initiation">
        <sequence resource="EMBL-CDS" id="AAH24860"/>
    </conflict>
    <text>Extended N-terminus.</text>
</comment>
<comment type="sequence caution" evidence="6">
    <conflict type="erroneous initiation">
        <sequence resource="EMBL-CDS" id="BAD32398"/>
    </conflict>
    <text>Extended N-terminus.</text>
</comment>
<accession>Q7TSH6</accession>
<accession>A0A338P6Z6</accession>
<accession>Q69ZP8</accession>
<accession>Q6PFF0</accession>
<accession>Q8R1B3</accession>
<gene>
    <name evidence="7" type="primary">Scaf4</name>
    <name evidence="5" type="synonym">Kiaa1172</name>
    <name evidence="7" type="synonym">Srsf15</name>
</gene>
<organism>
    <name type="scientific">Mus musculus</name>
    <name type="common">Mouse</name>
    <dbReference type="NCBI Taxonomy" id="10090"/>
    <lineage>
        <taxon>Eukaryota</taxon>
        <taxon>Metazoa</taxon>
        <taxon>Chordata</taxon>
        <taxon>Craniata</taxon>
        <taxon>Vertebrata</taxon>
        <taxon>Euteleostomi</taxon>
        <taxon>Mammalia</taxon>
        <taxon>Eutheria</taxon>
        <taxon>Euarchontoglires</taxon>
        <taxon>Glires</taxon>
        <taxon>Rodentia</taxon>
        <taxon>Myomorpha</taxon>
        <taxon>Muroidea</taxon>
        <taxon>Muridae</taxon>
        <taxon>Murinae</taxon>
        <taxon>Mus</taxon>
        <taxon>Mus</taxon>
    </lineage>
</organism>
<reference key="1">
    <citation type="journal article" date="2004" name="DNA Res.">
        <title>Prediction of the coding sequences of mouse homologues of KIAA gene: IV. The complete nucleotide sequences of 500 mouse KIAA-homologous cDNAs identified by screening of terminal sequences of cDNA clones randomly sampled from size-fractionated libraries.</title>
        <authorList>
            <person name="Okazaki N."/>
            <person name="Kikuno R."/>
            <person name="Ohara R."/>
            <person name="Inamoto S."/>
            <person name="Koseki H."/>
            <person name="Hiraoka S."/>
            <person name="Saga Y."/>
            <person name="Seino S."/>
            <person name="Nishimura M."/>
            <person name="Kaisho T."/>
            <person name="Hoshino K."/>
            <person name="Kitamura H."/>
            <person name="Nagase T."/>
            <person name="Ohara O."/>
            <person name="Koga H."/>
        </authorList>
    </citation>
    <scope>NUCLEOTIDE SEQUENCE [LARGE SCALE MRNA] (ISOFORM 2)</scope>
    <source>
        <tissue>Fetal brain</tissue>
    </source>
</reference>
<reference key="2">
    <citation type="journal article" date="2009" name="PLoS Biol.">
        <title>Lineage-specific biology revealed by a finished genome assembly of the mouse.</title>
        <authorList>
            <person name="Church D.M."/>
            <person name="Goodstadt L."/>
            <person name="Hillier L.W."/>
            <person name="Zody M.C."/>
            <person name="Goldstein S."/>
            <person name="She X."/>
            <person name="Bult C.J."/>
            <person name="Agarwala R."/>
            <person name="Cherry J.L."/>
            <person name="DiCuccio M."/>
            <person name="Hlavina W."/>
            <person name="Kapustin Y."/>
            <person name="Meric P."/>
            <person name="Maglott D."/>
            <person name="Birtle Z."/>
            <person name="Marques A.C."/>
            <person name="Graves T."/>
            <person name="Zhou S."/>
            <person name="Teague B."/>
            <person name="Potamousis K."/>
            <person name="Churas C."/>
            <person name="Place M."/>
            <person name="Herschleb J."/>
            <person name="Runnheim R."/>
            <person name="Forrest D."/>
            <person name="Amos-Landgraf J."/>
            <person name="Schwartz D.C."/>
            <person name="Cheng Z."/>
            <person name="Lindblad-Toh K."/>
            <person name="Eichler E.E."/>
            <person name="Ponting C.P."/>
        </authorList>
    </citation>
    <scope>NUCLEOTIDE SEQUENCE [LARGE SCALE GENOMIC DNA]</scope>
    <source>
        <strain>C57BL/6J</strain>
    </source>
</reference>
<reference key="3">
    <citation type="journal article" date="2004" name="Genome Res.">
        <title>The status, quality, and expansion of the NIH full-length cDNA project: the Mammalian Gene Collection (MGC).</title>
        <authorList>
            <consortium name="The MGC Project Team"/>
        </authorList>
    </citation>
    <scope>NUCLEOTIDE SEQUENCE [LARGE SCALE MRNA] (ISOFORMS 1; 2 AND 3)</scope>
    <source>
        <strain>C57BL/6J</strain>
        <tissue>Brain</tissue>
    </source>
</reference>
<reference key="4">
    <citation type="journal article" date="2007" name="Proc. Natl. Acad. Sci. U.S.A.">
        <title>Large-scale phosphorylation analysis of mouse liver.</title>
        <authorList>
            <person name="Villen J."/>
            <person name="Beausoleil S.A."/>
            <person name="Gerber S.A."/>
            <person name="Gygi S.P."/>
        </authorList>
    </citation>
    <scope>IDENTIFICATION BY MASS SPECTROMETRY [LARGE SCALE ANALYSIS]</scope>
</reference>
<reference key="5">
    <citation type="journal article" date="2009" name="Immunity">
        <title>The phagosomal proteome in interferon-gamma-activated macrophages.</title>
        <authorList>
            <person name="Trost M."/>
            <person name="English L."/>
            <person name="Lemieux S."/>
            <person name="Courcelles M."/>
            <person name="Desjardins M."/>
            <person name="Thibault P."/>
        </authorList>
    </citation>
    <scope>IDENTIFICATION BY MASS SPECTROMETRY [LARGE SCALE ANALYSIS]</scope>
</reference>
<reference key="6">
    <citation type="journal article" date="2010" name="Cell">
        <title>A tissue-specific atlas of mouse protein phosphorylation and expression.</title>
        <authorList>
            <person name="Huttlin E.L."/>
            <person name="Jedrychowski M.P."/>
            <person name="Elias J.E."/>
            <person name="Goswami T."/>
            <person name="Rad R."/>
            <person name="Beausoleil S.A."/>
            <person name="Villen J."/>
            <person name="Haas W."/>
            <person name="Sowa M.E."/>
            <person name="Gygi S.P."/>
        </authorList>
    </citation>
    <scope>IDENTIFICATION BY MASS SPECTROMETRY [LARGE SCALE ANALYSIS]</scope>
</reference>
<feature type="chain" id="PRO_0000447631" description="SR-related and CTD-associated factor 4">
    <location>
        <begin position="1"/>
        <end position="1183"/>
    </location>
</feature>
<feature type="domain" description="CID" evidence="3">
    <location>
        <begin position="1"/>
        <end position="139"/>
    </location>
</feature>
<feature type="domain" description="RRM" evidence="2">
    <location>
        <begin position="569"/>
        <end position="643"/>
    </location>
</feature>
<feature type="region of interest" description="Disordered" evidence="4">
    <location>
        <begin position="299"/>
        <end position="324"/>
    </location>
</feature>
<feature type="region of interest" description="Disordered" evidence="4">
    <location>
        <begin position="348"/>
        <end position="561"/>
    </location>
</feature>
<feature type="region of interest" description="Disordered" evidence="4">
    <location>
        <begin position="691"/>
        <end position="722"/>
    </location>
</feature>
<feature type="region of interest" description="Disordered" evidence="4">
    <location>
        <begin position="800"/>
        <end position="858"/>
    </location>
</feature>
<feature type="region of interest" description="Disordered" evidence="4">
    <location>
        <begin position="920"/>
        <end position="1183"/>
    </location>
</feature>
<feature type="compositionally biased region" description="Pro residues" evidence="4">
    <location>
        <begin position="367"/>
        <end position="380"/>
    </location>
</feature>
<feature type="compositionally biased region" description="Low complexity" evidence="4">
    <location>
        <begin position="381"/>
        <end position="398"/>
    </location>
</feature>
<feature type="compositionally biased region" description="Pro residues" evidence="4">
    <location>
        <begin position="399"/>
        <end position="410"/>
    </location>
</feature>
<feature type="compositionally biased region" description="Low complexity" evidence="4">
    <location>
        <begin position="411"/>
        <end position="428"/>
    </location>
</feature>
<feature type="compositionally biased region" description="Pro residues" evidence="4">
    <location>
        <begin position="429"/>
        <end position="440"/>
    </location>
</feature>
<feature type="compositionally biased region" description="Polar residues" evidence="4">
    <location>
        <begin position="457"/>
        <end position="469"/>
    </location>
</feature>
<feature type="compositionally biased region" description="Basic and acidic residues" evidence="4">
    <location>
        <begin position="488"/>
        <end position="498"/>
    </location>
</feature>
<feature type="compositionally biased region" description="Basic residues" evidence="4">
    <location>
        <begin position="499"/>
        <end position="536"/>
    </location>
</feature>
<feature type="compositionally biased region" description="Basic and acidic residues" evidence="4">
    <location>
        <begin position="538"/>
        <end position="553"/>
    </location>
</feature>
<feature type="compositionally biased region" description="Pro residues" evidence="4">
    <location>
        <begin position="800"/>
        <end position="823"/>
    </location>
</feature>
<feature type="compositionally biased region" description="Pro residues" evidence="4">
    <location>
        <begin position="920"/>
        <end position="952"/>
    </location>
</feature>
<feature type="compositionally biased region" description="Low complexity" evidence="4">
    <location>
        <begin position="1006"/>
        <end position="1020"/>
    </location>
</feature>
<feature type="compositionally biased region" description="Basic and acidic residues" evidence="4">
    <location>
        <begin position="1047"/>
        <end position="1122"/>
    </location>
</feature>
<feature type="compositionally biased region" description="Polar residues" evidence="4">
    <location>
        <begin position="1136"/>
        <end position="1145"/>
    </location>
</feature>
<feature type="modified residue" description="N6-acetyllysine" evidence="1">
    <location>
        <position position="49"/>
    </location>
</feature>
<feature type="modified residue" description="Phosphoserine" evidence="1">
    <location>
        <position position="154"/>
    </location>
</feature>
<feature type="modified residue" description="Phosphoserine" evidence="1">
    <location>
        <position position="717"/>
    </location>
</feature>
<feature type="modified residue" description="Phosphoserine" evidence="1">
    <location>
        <position position="1042"/>
    </location>
</feature>
<feature type="splice variant" id="VSP_060218" description="In isoform 2.">
    <original>Q</original>
    <variation>QV</variation>
    <location>
        <position position="477"/>
    </location>
</feature>
<feature type="splice variant" id="VSP_060219" description="In isoform 3.">
    <original>S</original>
    <variation>SRSAS</variation>
    <location>
        <position position="501"/>
    </location>
</feature>
<feature type="splice variant" id="VSP_060220" description="In isoform 3.">
    <original>L</original>
    <variation>STIAGINEDTTKDLSIGNPIPTV</variation>
    <location>
        <position position="827"/>
    </location>
</feature>
<feature type="sequence conflict" description="In Ref. 1; BAD32398." evidence="6" ref="1">
    <original>Y</original>
    <variation>C</variation>
    <location>
        <position position="326"/>
    </location>
</feature>
<feature type="sequence conflict" description="In Ref. 3; AAH24860." evidence="6" ref="3">
    <original>F</original>
    <variation>L</variation>
    <location>
        <position position="954"/>
    </location>
</feature>
<feature type="sequence conflict" description="In Ref. 1; BAD32398." evidence="6" ref="1">
    <location>
        <position position="999"/>
    </location>
</feature>
<feature type="sequence conflict" description="In Ref. 1; BAD32398." evidence="6" ref="1">
    <original>V</original>
    <variation>A</variation>
    <location>
        <position position="1165"/>
    </location>
</feature>
<evidence type="ECO:0000250" key="1">
    <source>
        <dbReference type="UniProtKB" id="O95104"/>
    </source>
</evidence>
<evidence type="ECO:0000255" key="2">
    <source>
        <dbReference type="PROSITE-ProRule" id="PRU00176"/>
    </source>
</evidence>
<evidence type="ECO:0000255" key="3">
    <source>
        <dbReference type="PROSITE-ProRule" id="PRU00724"/>
    </source>
</evidence>
<evidence type="ECO:0000256" key="4">
    <source>
        <dbReference type="SAM" id="MobiDB-lite"/>
    </source>
</evidence>
<evidence type="ECO:0000303" key="5">
    <source>
    </source>
</evidence>
<evidence type="ECO:0000305" key="6"/>
<evidence type="ECO:0000312" key="7">
    <source>
        <dbReference type="MGI" id="MGI:2146350"/>
    </source>
</evidence>
<keyword id="KW-0007">Acetylation</keyword>
<keyword id="KW-0025">Alternative splicing</keyword>
<keyword id="KW-0488">Methylation</keyword>
<keyword id="KW-0539">Nucleus</keyword>
<keyword id="KW-0597">Phosphoprotein</keyword>
<keyword id="KW-1185">Reference proteome</keyword>
<keyword id="KW-0694">RNA-binding</keyword>
<keyword id="KW-0804">Transcription</keyword>
<keyword id="KW-0805">Transcription regulation</keyword>
<protein>
    <recommendedName>
        <fullName evidence="6">SR-related and CTD-associated factor 4</fullName>
    </recommendedName>
    <alternativeName>
        <fullName evidence="6">CTD-binding SR-like protein RA4</fullName>
    </alternativeName>
    <alternativeName>
        <fullName evidence="6">Splicing factor, arginine/serine-rich 15</fullName>
    </alternativeName>
</protein>